<proteinExistence type="inferred from homology"/>
<name>TBB_COPC7</name>
<accession>P79008</accession>
<accession>A8P2E3</accession>
<reference key="1">
    <citation type="journal article" date="1999" name="Mycoscience">
        <title>Effects of amino-acid substitutions in beta tubulin on benomyl sensitivity and microtubule functions in Coprinus cinereus.</title>
        <authorList>
            <person name="Matsuo T."/>
            <person name="Yamamoto Y."/>
            <person name="Muraguchi H."/>
            <person name="Kamada T."/>
        </authorList>
    </citation>
    <scope>NUCLEOTIDE SEQUENCE [GENOMIC DNA]</scope>
</reference>
<reference key="2">
    <citation type="journal article" date="2010" name="Proc. Natl. Acad. Sci. U.S.A.">
        <title>Insights into evolution of multicellular fungi from the assembled chromosomes of the mushroom Coprinopsis cinerea (Coprinus cinereus).</title>
        <authorList>
            <person name="Stajich J.E."/>
            <person name="Wilke S.K."/>
            <person name="Ahren D."/>
            <person name="Au C.H."/>
            <person name="Birren B.W."/>
            <person name="Borodovsky M."/>
            <person name="Burns C."/>
            <person name="Canbaeck B."/>
            <person name="Casselton L.A."/>
            <person name="Cheng C.K."/>
            <person name="Deng J."/>
            <person name="Dietrich F.S."/>
            <person name="Fargo D.C."/>
            <person name="Farman M.L."/>
            <person name="Gathman A.C."/>
            <person name="Goldberg J."/>
            <person name="Guigo R."/>
            <person name="Hoegger P.J."/>
            <person name="Hooker J.B."/>
            <person name="Huggins A."/>
            <person name="James T.Y."/>
            <person name="Kamada T."/>
            <person name="Kilaru S."/>
            <person name="Kodira C."/>
            <person name="Kuees U."/>
            <person name="Kupfer D."/>
            <person name="Kwan H.S."/>
            <person name="Lomsadze A."/>
            <person name="Li W."/>
            <person name="Lilly W.W."/>
            <person name="Ma L.-J."/>
            <person name="Mackey A.J."/>
            <person name="Manning G."/>
            <person name="Martin F."/>
            <person name="Muraguchi H."/>
            <person name="Natvig D.O."/>
            <person name="Palmerini H."/>
            <person name="Ramesh M.A."/>
            <person name="Rehmeyer C.J."/>
            <person name="Roe B.A."/>
            <person name="Shenoy N."/>
            <person name="Stanke M."/>
            <person name="Ter-Hovhannisyan V."/>
            <person name="Tunlid A."/>
            <person name="Velagapudi R."/>
            <person name="Vision T.J."/>
            <person name="Zeng Q."/>
            <person name="Zolan M.E."/>
            <person name="Pukkila P.J."/>
        </authorList>
    </citation>
    <scope>NUCLEOTIDE SEQUENCE [LARGE SCALE GENOMIC DNA]</scope>
    <source>
        <strain>Okayama-7 / 130 / ATCC MYA-4618 / FGSC 9003</strain>
    </source>
</reference>
<protein>
    <recommendedName>
        <fullName>Tubulin beta chain</fullName>
    </recommendedName>
    <alternativeName>
        <fullName>Beta-tubulin</fullName>
    </alternativeName>
</protein>
<gene>
    <name type="ORF">CC1G_04743</name>
</gene>
<organism>
    <name type="scientific">Coprinopsis cinerea (strain Okayama-7 / 130 / ATCC MYA-4618 / FGSC 9003)</name>
    <name type="common">Inky cap fungus</name>
    <name type="synonym">Hormographiella aspergillata</name>
    <dbReference type="NCBI Taxonomy" id="240176"/>
    <lineage>
        <taxon>Eukaryota</taxon>
        <taxon>Fungi</taxon>
        <taxon>Dikarya</taxon>
        <taxon>Basidiomycota</taxon>
        <taxon>Agaricomycotina</taxon>
        <taxon>Agaricomycetes</taxon>
        <taxon>Agaricomycetidae</taxon>
        <taxon>Agaricales</taxon>
        <taxon>Agaricineae</taxon>
        <taxon>Psathyrellaceae</taxon>
        <taxon>Coprinopsis</taxon>
    </lineage>
</organism>
<keyword id="KW-0963">Cytoplasm</keyword>
<keyword id="KW-0206">Cytoskeleton</keyword>
<keyword id="KW-0342">GTP-binding</keyword>
<keyword id="KW-0460">Magnesium</keyword>
<keyword id="KW-0479">Metal-binding</keyword>
<keyword id="KW-0493">Microtubule</keyword>
<keyword id="KW-0547">Nucleotide-binding</keyword>
<keyword id="KW-1185">Reference proteome</keyword>
<comment type="function">
    <text>Tubulin is the major constituent of microtubules, a cylinder consisting of laterally associated linear protofilaments composed of alpha- and beta-tubulin heterodimers. Microtubules grow by the addition of GTP-tubulin dimers to the microtubule end, where a stabilizing cap forms. Below the cap, tubulin dimers are in GDP-bound state, owing to GTPase activity of alpha-tubulin.</text>
</comment>
<comment type="cofactor">
    <cofactor evidence="1">
        <name>Mg(2+)</name>
        <dbReference type="ChEBI" id="CHEBI:18420"/>
    </cofactor>
</comment>
<comment type="subunit">
    <text>Dimer of alpha and beta chains. A typical microtubule is a hollow water-filled tube with an outer diameter of 25 nm and an inner diameter of 15 nM. Alpha-beta heterodimers associate head-to-tail to form protofilaments running lengthwise along the microtubule wall with the beta-tubulin subunit facing the microtubule plus end conferring a structural polarity. Microtubules usually have 13 protofilaments but different protofilament numbers can be found in some organisms and specialized cells.</text>
</comment>
<comment type="subcellular location">
    <subcellularLocation>
        <location>Cytoplasm</location>
        <location>Cytoskeleton</location>
    </subcellularLocation>
</comment>
<comment type="similarity">
    <text evidence="3">Belongs to the tubulin family.</text>
</comment>
<feature type="chain" id="PRO_0000048405" description="Tubulin beta chain">
    <location>
        <begin position="1"/>
        <end position="445"/>
    </location>
</feature>
<feature type="binding site" evidence="2">
    <location>
        <position position="11"/>
    </location>
    <ligand>
        <name>GTP</name>
        <dbReference type="ChEBI" id="CHEBI:37565"/>
    </ligand>
</feature>
<feature type="binding site" evidence="1">
    <location>
        <position position="69"/>
    </location>
    <ligand>
        <name>GTP</name>
        <dbReference type="ChEBI" id="CHEBI:37565"/>
    </ligand>
</feature>
<feature type="binding site" evidence="1">
    <location>
        <position position="69"/>
    </location>
    <ligand>
        <name>Mg(2+)</name>
        <dbReference type="ChEBI" id="CHEBI:18420"/>
    </ligand>
</feature>
<feature type="binding site" evidence="2">
    <location>
        <position position="138"/>
    </location>
    <ligand>
        <name>GTP</name>
        <dbReference type="ChEBI" id="CHEBI:37565"/>
    </ligand>
</feature>
<feature type="binding site" evidence="2">
    <location>
        <position position="142"/>
    </location>
    <ligand>
        <name>GTP</name>
        <dbReference type="ChEBI" id="CHEBI:37565"/>
    </ligand>
</feature>
<feature type="binding site" evidence="2">
    <location>
        <position position="143"/>
    </location>
    <ligand>
        <name>GTP</name>
        <dbReference type="ChEBI" id="CHEBI:37565"/>
    </ligand>
</feature>
<feature type="binding site" evidence="2">
    <location>
        <position position="144"/>
    </location>
    <ligand>
        <name>GTP</name>
        <dbReference type="ChEBI" id="CHEBI:37565"/>
    </ligand>
</feature>
<feature type="binding site" evidence="2">
    <location>
        <position position="204"/>
    </location>
    <ligand>
        <name>GTP</name>
        <dbReference type="ChEBI" id="CHEBI:37565"/>
    </ligand>
</feature>
<feature type="binding site" evidence="2">
    <location>
        <position position="226"/>
    </location>
    <ligand>
        <name>GTP</name>
        <dbReference type="ChEBI" id="CHEBI:37565"/>
    </ligand>
</feature>
<dbReference type="EMBL" id="AB000116">
    <property type="protein sequence ID" value="BAA19057.1"/>
    <property type="molecule type" value="Genomic_DNA"/>
</dbReference>
<dbReference type="EMBL" id="AACS02000013">
    <property type="protein sequence ID" value="EAU83487.1"/>
    <property type="molecule type" value="Genomic_DNA"/>
</dbReference>
<dbReference type="RefSeq" id="XP_001838299.1">
    <property type="nucleotide sequence ID" value="XM_001838247.2"/>
</dbReference>
<dbReference type="SMR" id="P79008"/>
<dbReference type="FunCoup" id="P79008">
    <property type="interactions" value="118"/>
</dbReference>
<dbReference type="STRING" id="240176.P79008"/>
<dbReference type="GeneID" id="6014879"/>
<dbReference type="KEGG" id="cci:CC1G_04743"/>
<dbReference type="VEuPathDB" id="FungiDB:CC1G_04743"/>
<dbReference type="eggNOG" id="KOG1375">
    <property type="taxonomic scope" value="Eukaryota"/>
</dbReference>
<dbReference type="HOGENOM" id="CLU_015718_1_1_1"/>
<dbReference type="InParanoid" id="P79008"/>
<dbReference type="OMA" id="WVPRSVN"/>
<dbReference type="OrthoDB" id="1662883at2759"/>
<dbReference type="Proteomes" id="UP000001861">
    <property type="component" value="Unassembled WGS sequence"/>
</dbReference>
<dbReference type="GO" id="GO:0005737">
    <property type="term" value="C:cytoplasm"/>
    <property type="evidence" value="ECO:0007669"/>
    <property type="project" value="UniProtKB-KW"/>
</dbReference>
<dbReference type="GO" id="GO:0005874">
    <property type="term" value="C:microtubule"/>
    <property type="evidence" value="ECO:0007669"/>
    <property type="project" value="UniProtKB-KW"/>
</dbReference>
<dbReference type="GO" id="GO:0005525">
    <property type="term" value="F:GTP binding"/>
    <property type="evidence" value="ECO:0007669"/>
    <property type="project" value="UniProtKB-KW"/>
</dbReference>
<dbReference type="GO" id="GO:0003924">
    <property type="term" value="F:GTPase activity"/>
    <property type="evidence" value="ECO:0007669"/>
    <property type="project" value="InterPro"/>
</dbReference>
<dbReference type="GO" id="GO:0046872">
    <property type="term" value="F:metal ion binding"/>
    <property type="evidence" value="ECO:0007669"/>
    <property type="project" value="UniProtKB-KW"/>
</dbReference>
<dbReference type="GO" id="GO:0005200">
    <property type="term" value="F:structural constituent of cytoskeleton"/>
    <property type="evidence" value="ECO:0007669"/>
    <property type="project" value="InterPro"/>
</dbReference>
<dbReference type="GO" id="GO:0007017">
    <property type="term" value="P:microtubule-based process"/>
    <property type="evidence" value="ECO:0007669"/>
    <property type="project" value="InterPro"/>
</dbReference>
<dbReference type="CDD" id="cd02187">
    <property type="entry name" value="beta_tubulin"/>
    <property type="match status" value="1"/>
</dbReference>
<dbReference type="FunFam" id="1.10.287.600:FF:000006">
    <property type="entry name" value="Tubulin beta chain"/>
    <property type="match status" value="1"/>
</dbReference>
<dbReference type="FunFam" id="3.30.1330.20:FF:000002">
    <property type="entry name" value="Tubulin beta chain"/>
    <property type="match status" value="1"/>
</dbReference>
<dbReference type="FunFam" id="3.40.50.1440:FF:000003">
    <property type="entry name" value="Tubulin beta chain"/>
    <property type="match status" value="1"/>
</dbReference>
<dbReference type="Gene3D" id="1.10.287.600">
    <property type="entry name" value="Helix hairpin bin"/>
    <property type="match status" value="1"/>
</dbReference>
<dbReference type="Gene3D" id="3.30.1330.20">
    <property type="entry name" value="Tubulin/FtsZ, C-terminal domain"/>
    <property type="match status" value="1"/>
</dbReference>
<dbReference type="Gene3D" id="3.40.50.1440">
    <property type="entry name" value="Tubulin/FtsZ, GTPase domain"/>
    <property type="match status" value="1"/>
</dbReference>
<dbReference type="InterPro" id="IPR013838">
    <property type="entry name" value="Beta-tubulin_BS"/>
</dbReference>
<dbReference type="InterPro" id="IPR002453">
    <property type="entry name" value="Beta_tubulin"/>
</dbReference>
<dbReference type="InterPro" id="IPR008280">
    <property type="entry name" value="Tub_FtsZ_C"/>
</dbReference>
<dbReference type="InterPro" id="IPR000217">
    <property type="entry name" value="Tubulin"/>
</dbReference>
<dbReference type="InterPro" id="IPR037103">
    <property type="entry name" value="Tubulin/FtsZ-like_C"/>
</dbReference>
<dbReference type="InterPro" id="IPR018316">
    <property type="entry name" value="Tubulin/FtsZ_2-layer-sand-dom"/>
</dbReference>
<dbReference type="InterPro" id="IPR036525">
    <property type="entry name" value="Tubulin/FtsZ_GTPase_sf"/>
</dbReference>
<dbReference type="InterPro" id="IPR023123">
    <property type="entry name" value="Tubulin_C"/>
</dbReference>
<dbReference type="InterPro" id="IPR017975">
    <property type="entry name" value="Tubulin_CS"/>
</dbReference>
<dbReference type="InterPro" id="IPR003008">
    <property type="entry name" value="Tubulin_FtsZ_GTPase"/>
</dbReference>
<dbReference type="PANTHER" id="PTHR11588">
    <property type="entry name" value="TUBULIN"/>
    <property type="match status" value="1"/>
</dbReference>
<dbReference type="Pfam" id="PF00091">
    <property type="entry name" value="Tubulin"/>
    <property type="match status" value="1"/>
</dbReference>
<dbReference type="Pfam" id="PF03953">
    <property type="entry name" value="Tubulin_C"/>
    <property type="match status" value="1"/>
</dbReference>
<dbReference type="PRINTS" id="PR01163">
    <property type="entry name" value="BETATUBULIN"/>
</dbReference>
<dbReference type="PRINTS" id="PR01161">
    <property type="entry name" value="TUBULIN"/>
</dbReference>
<dbReference type="SMART" id="SM00864">
    <property type="entry name" value="Tubulin"/>
    <property type="match status" value="1"/>
</dbReference>
<dbReference type="SMART" id="SM00865">
    <property type="entry name" value="Tubulin_C"/>
    <property type="match status" value="1"/>
</dbReference>
<dbReference type="SUPFAM" id="SSF55307">
    <property type="entry name" value="Tubulin C-terminal domain-like"/>
    <property type="match status" value="1"/>
</dbReference>
<dbReference type="SUPFAM" id="SSF52490">
    <property type="entry name" value="Tubulin nucleotide-binding domain-like"/>
    <property type="match status" value="1"/>
</dbReference>
<dbReference type="PROSITE" id="PS00227">
    <property type="entry name" value="TUBULIN"/>
    <property type="match status" value="1"/>
</dbReference>
<dbReference type="PROSITE" id="PS00228">
    <property type="entry name" value="TUBULIN_B_AUTOREG"/>
    <property type="match status" value="1"/>
</dbReference>
<sequence>MREIVHLQTGQCGNQIGAKFWEVVSDEHGIERDGLYKGNNDLQLERISVYYNEIGASKYVPRAVLVDLEPGTMDSVRSGPLGSLFRPDNFVFGQSGAGNNWAKGHYTEGAELVDSVLDVVRKEAEGCDCLQGFQITHSLGGGTGAGMGTLLISKIREEYPDRMMCTYSVVPSPKVSDTVVEPYNATLSVHQLVENSDETFCIDNEALYDICFRTLKLSTPTYGDLNHLVSIVMSGITTCLRFPGQLNSDLRKLAVNMVPFPRLHFFMTGFAPLTARGSAQYRAVTVPELTQQMFDAKNMMAASDPRHGRYLTVAAVFRGKVSMKEVEEQMQNVQNKNSAYFVEWIPNNVLTAQCDIPPRGLKMAVTFLGNSTAIQELFKRVSDQFTAMFKRKAFLHWYTQEGMDEMEFTEAESNMQDLVAEYQQYQDATVEEEGEYEDEVLEDEQ</sequence>
<evidence type="ECO:0000250" key="1">
    <source>
        <dbReference type="UniProtKB" id="P68363"/>
    </source>
</evidence>
<evidence type="ECO:0000250" key="2">
    <source>
        <dbReference type="UniProtKB" id="Q13509"/>
    </source>
</evidence>
<evidence type="ECO:0000305" key="3"/>